<sequence length="355" mass="38691">MHERRLNILLRPAALLYGLVAAVRNALFDRGMLKAWKSPIPVVSIGNLTAGGTGKTPLVDWVLKYYLSIGCRPAVVSRGYGRRSKGVQLVSDGRNILLGSTRSGDETAMLAANNPEAVVVVAEQRSEGVQFIMERFRGERPDVIILDDAFQHRQLARDLDIVVINSREPFAAAKMLPEGRLREPKSGIGRADVAVLSKITDESKADAIEAELTGSVALVARTRVVIGELSPFGPKGRSTAPHPDPAGLKALAFAGIASPASFVESLMKKGVHVVEQRFFRDHEPYTLNNFLPLVEEARRKGLTLVTTEKDRYRLEGEPGLLEKTEGVGCCCLNIATGFTRGAEKLQEMLKAVVRD</sequence>
<proteinExistence type="inferred from homology"/>
<protein>
    <recommendedName>
        <fullName evidence="1">Tetraacyldisaccharide 4'-kinase</fullName>
        <ecNumber evidence="1">2.7.1.130</ecNumber>
    </recommendedName>
    <alternativeName>
        <fullName evidence="1">Lipid A 4'-kinase</fullName>
    </alternativeName>
</protein>
<reference key="1">
    <citation type="submission" date="2005-08" db="EMBL/GenBank/DDBJ databases">
        <title>Complete sequence of Pelodictyon luteolum DSM 273.</title>
        <authorList>
            <consortium name="US DOE Joint Genome Institute"/>
            <person name="Copeland A."/>
            <person name="Lucas S."/>
            <person name="Lapidus A."/>
            <person name="Barry K."/>
            <person name="Detter J.C."/>
            <person name="Glavina T."/>
            <person name="Hammon N."/>
            <person name="Israni S."/>
            <person name="Pitluck S."/>
            <person name="Bryant D."/>
            <person name="Schmutz J."/>
            <person name="Larimer F."/>
            <person name="Land M."/>
            <person name="Kyrpides N."/>
            <person name="Ivanova N."/>
            <person name="Richardson P."/>
        </authorList>
    </citation>
    <scope>NUCLEOTIDE SEQUENCE [LARGE SCALE GENOMIC DNA]</scope>
    <source>
        <strain>DSM 273 / BCRC 81028 / 2530</strain>
    </source>
</reference>
<organism>
    <name type="scientific">Chlorobium luteolum (strain DSM 273 / BCRC 81028 / 2530)</name>
    <name type="common">Pelodictyon luteolum</name>
    <dbReference type="NCBI Taxonomy" id="319225"/>
    <lineage>
        <taxon>Bacteria</taxon>
        <taxon>Pseudomonadati</taxon>
        <taxon>Chlorobiota</taxon>
        <taxon>Chlorobiia</taxon>
        <taxon>Chlorobiales</taxon>
        <taxon>Chlorobiaceae</taxon>
        <taxon>Chlorobium/Pelodictyon group</taxon>
        <taxon>Pelodictyon</taxon>
    </lineage>
</organism>
<feature type="chain" id="PRO_1000080469" description="Tetraacyldisaccharide 4'-kinase">
    <location>
        <begin position="1"/>
        <end position="355"/>
    </location>
</feature>
<feature type="binding site" evidence="1">
    <location>
        <begin position="49"/>
        <end position="56"/>
    </location>
    <ligand>
        <name>ATP</name>
        <dbReference type="ChEBI" id="CHEBI:30616"/>
    </ligand>
</feature>
<accession>Q3B2C2</accession>
<dbReference type="EC" id="2.7.1.130" evidence="1"/>
<dbReference type="EMBL" id="CP000096">
    <property type="protein sequence ID" value="ABB24509.1"/>
    <property type="molecule type" value="Genomic_DNA"/>
</dbReference>
<dbReference type="RefSeq" id="WP_011358381.1">
    <property type="nucleotide sequence ID" value="NC_007512.1"/>
</dbReference>
<dbReference type="SMR" id="Q3B2C2"/>
<dbReference type="STRING" id="319225.Plut_1655"/>
<dbReference type="KEGG" id="plt:Plut_1655"/>
<dbReference type="eggNOG" id="COG1663">
    <property type="taxonomic scope" value="Bacteria"/>
</dbReference>
<dbReference type="HOGENOM" id="CLU_038816_6_0_10"/>
<dbReference type="OrthoDB" id="9766423at2"/>
<dbReference type="UniPathway" id="UPA00359">
    <property type="reaction ID" value="UER00482"/>
</dbReference>
<dbReference type="Proteomes" id="UP000002709">
    <property type="component" value="Chromosome"/>
</dbReference>
<dbReference type="GO" id="GO:0005886">
    <property type="term" value="C:plasma membrane"/>
    <property type="evidence" value="ECO:0007669"/>
    <property type="project" value="TreeGrafter"/>
</dbReference>
<dbReference type="GO" id="GO:0005524">
    <property type="term" value="F:ATP binding"/>
    <property type="evidence" value="ECO:0007669"/>
    <property type="project" value="UniProtKB-UniRule"/>
</dbReference>
<dbReference type="GO" id="GO:0009029">
    <property type="term" value="F:tetraacyldisaccharide 4'-kinase activity"/>
    <property type="evidence" value="ECO:0007669"/>
    <property type="project" value="UniProtKB-UniRule"/>
</dbReference>
<dbReference type="GO" id="GO:0009245">
    <property type="term" value="P:lipid A biosynthetic process"/>
    <property type="evidence" value="ECO:0007669"/>
    <property type="project" value="UniProtKB-UniRule"/>
</dbReference>
<dbReference type="GO" id="GO:0009244">
    <property type="term" value="P:lipopolysaccharide core region biosynthetic process"/>
    <property type="evidence" value="ECO:0007669"/>
    <property type="project" value="TreeGrafter"/>
</dbReference>
<dbReference type="HAMAP" id="MF_00409">
    <property type="entry name" value="LpxK"/>
    <property type="match status" value="1"/>
</dbReference>
<dbReference type="InterPro" id="IPR003758">
    <property type="entry name" value="LpxK"/>
</dbReference>
<dbReference type="InterPro" id="IPR027417">
    <property type="entry name" value="P-loop_NTPase"/>
</dbReference>
<dbReference type="NCBIfam" id="TIGR00682">
    <property type="entry name" value="lpxK"/>
    <property type="match status" value="1"/>
</dbReference>
<dbReference type="PANTHER" id="PTHR42724">
    <property type="entry name" value="TETRAACYLDISACCHARIDE 4'-KINASE"/>
    <property type="match status" value="1"/>
</dbReference>
<dbReference type="PANTHER" id="PTHR42724:SF1">
    <property type="entry name" value="TETRAACYLDISACCHARIDE 4'-KINASE, MITOCHONDRIAL-RELATED"/>
    <property type="match status" value="1"/>
</dbReference>
<dbReference type="Pfam" id="PF02606">
    <property type="entry name" value="LpxK"/>
    <property type="match status" value="1"/>
</dbReference>
<dbReference type="SUPFAM" id="SSF52540">
    <property type="entry name" value="P-loop containing nucleoside triphosphate hydrolases"/>
    <property type="match status" value="1"/>
</dbReference>
<name>LPXK_CHLL3</name>
<keyword id="KW-0067">ATP-binding</keyword>
<keyword id="KW-0418">Kinase</keyword>
<keyword id="KW-0441">Lipid A biosynthesis</keyword>
<keyword id="KW-0444">Lipid biosynthesis</keyword>
<keyword id="KW-0443">Lipid metabolism</keyword>
<keyword id="KW-0547">Nucleotide-binding</keyword>
<keyword id="KW-1185">Reference proteome</keyword>
<keyword id="KW-0808">Transferase</keyword>
<comment type="function">
    <text evidence="1">Transfers the gamma-phosphate of ATP to the 4'-position of a tetraacyldisaccharide 1-phosphate intermediate (termed DS-1-P) to form tetraacyldisaccharide 1,4'-bis-phosphate (lipid IVA).</text>
</comment>
<comment type="catalytic activity">
    <reaction evidence="1">
        <text>a lipid A disaccharide + ATP = a lipid IVA + ADP + H(+)</text>
        <dbReference type="Rhea" id="RHEA:67840"/>
        <dbReference type="ChEBI" id="CHEBI:15378"/>
        <dbReference type="ChEBI" id="CHEBI:30616"/>
        <dbReference type="ChEBI" id="CHEBI:176343"/>
        <dbReference type="ChEBI" id="CHEBI:176425"/>
        <dbReference type="ChEBI" id="CHEBI:456216"/>
        <dbReference type="EC" id="2.7.1.130"/>
    </reaction>
</comment>
<comment type="pathway">
    <text evidence="1">Glycolipid biosynthesis; lipid IV(A) biosynthesis; lipid IV(A) from (3R)-3-hydroxytetradecanoyl-[acyl-carrier-protein] and UDP-N-acetyl-alpha-D-glucosamine: step 6/6.</text>
</comment>
<comment type="similarity">
    <text evidence="1">Belongs to the LpxK family.</text>
</comment>
<gene>
    <name evidence="1" type="primary">lpxK</name>
    <name type="ordered locus">Plut_1655</name>
</gene>
<evidence type="ECO:0000255" key="1">
    <source>
        <dbReference type="HAMAP-Rule" id="MF_00409"/>
    </source>
</evidence>